<reference key="1">
    <citation type="submission" date="2006-12" db="EMBL/GenBank/DDBJ databases">
        <title>Complete sequence of Shewanella amazonensis SB2B.</title>
        <authorList>
            <consortium name="US DOE Joint Genome Institute"/>
            <person name="Copeland A."/>
            <person name="Lucas S."/>
            <person name="Lapidus A."/>
            <person name="Barry K."/>
            <person name="Detter J.C."/>
            <person name="Glavina del Rio T."/>
            <person name="Hammon N."/>
            <person name="Israni S."/>
            <person name="Dalin E."/>
            <person name="Tice H."/>
            <person name="Pitluck S."/>
            <person name="Munk A.C."/>
            <person name="Brettin T."/>
            <person name="Bruce D."/>
            <person name="Han C."/>
            <person name="Tapia R."/>
            <person name="Gilna P."/>
            <person name="Schmutz J."/>
            <person name="Larimer F."/>
            <person name="Land M."/>
            <person name="Hauser L."/>
            <person name="Kyrpides N."/>
            <person name="Mikhailova N."/>
            <person name="Fredrickson J."/>
            <person name="Richardson P."/>
        </authorList>
    </citation>
    <scope>NUCLEOTIDE SEQUENCE [LARGE SCALE GENOMIC DNA]</scope>
    <source>
        <strain>ATCC BAA-1098 / SB2B</strain>
    </source>
</reference>
<dbReference type="EC" id="2.1.1.77" evidence="1"/>
<dbReference type="EMBL" id="CP000507">
    <property type="protein sequence ID" value="ABL99249.1"/>
    <property type="molecule type" value="Genomic_DNA"/>
</dbReference>
<dbReference type="RefSeq" id="WP_011759158.1">
    <property type="nucleotide sequence ID" value="NC_008700.1"/>
</dbReference>
<dbReference type="SMR" id="A1S4E3"/>
<dbReference type="STRING" id="326297.Sama_1042"/>
<dbReference type="KEGG" id="saz:Sama_1042"/>
<dbReference type="eggNOG" id="COG2518">
    <property type="taxonomic scope" value="Bacteria"/>
</dbReference>
<dbReference type="HOGENOM" id="CLU_055432_2_0_6"/>
<dbReference type="OrthoDB" id="9810066at2"/>
<dbReference type="Proteomes" id="UP000009175">
    <property type="component" value="Chromosome"/>
</dbReference>
<dbReference type="GO" id="GO:0005737">
    <property type="term" value="C:cytoplasm"/>
    <property type="evidence" value="ECO:0007669"/>
    <property type="project" value="UniProtKB-SubCell"/>
</dbReference>
<dbReference type="GO" id="GO:0004719">
    <property type="term" value="F:protein-L-isoaspartate (D-aspartate) O-methyltransferase activity"/>
    <property type="evidence" value="ECO:0007669"/>
    <property type="project" value="UniProtKB-UniRule"/>
</dbReference>
<dbReference type="GO" id="GO:0032259">
    <property type="term" value="P:methylation"/>
    <property type="evidence" value="ECO:0007669"/>
    <property type="project" value="UniProtKB-KW"/>
</dbReference>
<dbReference type="GO" id="GO:0036211">
    <property type="term" value="P:protein modification process"/>
    <property type="evidence" value="ECO:0007669"/>
    <property type="project" value="UniProtKB-UniRule"/>
</dbReference>
<dbReference type="GO" id="GO:0030091">
    <property type="term" value="P:protein repair"/>
    <property type="evidence" value="ECO:0007669"/>
    <property type="project" value="UniProtKB-UniRule"/>
</dbReference>
<dbReference type="CDD" id="cd02440">
    <property type="entry name" value="AdoMet_MTases"/>
    <property type="match status" value="1"/>
</dbReference>
<dbReference type="FunFam" id="3.40.50.150:FF:000010">
    <property type="entry name" value="Protein-L-isoaspartate O-methyltransferase"/>
    <property type="match status" value="1"/>
</dbReference>
<dbReference type="Gene3D" id="3.40.50.150">
    <property type="entry name" value="Vaccinia Virus protein VP39"/>
    <property type="match status" value="1"/>
</dbReference>
<dbReference type="HAMAP" id="MF_00090">
    <property type="entry name" value="PIMT"/>
    <property type="match status" value="1"/>
</dbReference>
<dbReference type="InterPro" id="IPR000682">
    <property type="entry name" value="PCMT"/>
</dbReference>
<dbReference type="InterPro" id="IPR029063">
    <property type="entry name" value="SAM-dependent_MTases_sf"/>
</dbReference>
<dbReference type="NCBIfam" id="TIGR00080">
    <property type="entry name" value="pimt"/>
    <property type="match status" value="1"/>
</dbReference>
<dbReference type="NCBIfam" id="NF001453">
    <property type="entry name" value="PRK00312.1"/>
    <property type="match status" value="1"/>
</dbReference>
<dbReference type="PANTHER" id="PTHR11579">
    <property type="entry name" value="PROTEIN-L-ISOASPARTATE O-METHYLTRANSFERASE"/>
    <property type="match status" value="1"/>
</dbReference>
<dbReference type="PANTHER" id="PTHR11579:SF0">
    <property type="entry name" value="PROTEIN-L-ISOASPARTATE(D-ASPARTATE) O-METHYLTRANSFERASE"/>
    <property type="match status" value="1"/>
</dbReference>
<dbReference type="Pfam" id="PF01135">
    <property type="entry name" value="PCMT"/>
    <property type="match status" value="1"/>
</dbReference>
<dbReference type="SUPFAM" id="SSF53335">
    <property type="entry name" value="S-adenosyl-L-methionine-dependent methyltransferases"/>
    <property type="match status" value="1"/>
</dbReference>
<dbReference type="PROSITE" id="PS01279">
    <property type="entry name" value="PCMT"/>
    <property type="match status" value="1"/>
</dbReference>
<comment type="function">
    <text evidence="1">Catalyzes the methyl esterification of L-isoaspartyl residues in peptides and proteins that result from spontaneous decomposition of normal L-aspartyl and L-asparaginyl residues. It plays a role in the repair and/or degradation of damaged proteins.</text>
</comment>
<comment type="catalytic activity">
    <reaction evidence="1">
        <text>[protein]-L-isoaspartate + S-adenosyl-L-methionine = [protein]-L-isoaspartate alpha-methyl ester + S-adenosyl-L-homocysteine</text>
        <dbReference type="Rhea" id="RHEA:12705"/>
        <dbReference type="Rhea" id="RHEA-COMP:12143"/>
        <dbReference type="Rhea" id="RHEA-COMP:12144"/>
        <dbReference type="ChEBI" id="CHEBI:57856"/>
        <dbReference type="ChEBI" id="CHEBI:59789"/>
        <dbReference type="ChEBI" id="CHEBI:90596"/>
        <dbReference type="ChEBI" id="CHEBI:90598"/>
        <dbReference type="EC" id="2.1.1.77"/>
    </reaction>
</comment>
<comment type="subcellular location">
    <subcellularLocation>
        <location evidence="1">Cytoplasm</location>
    </subcellularLocation>
</comment>
<comment type="similarity">
    <text evidence="1">Belongs to the methyltransferase superfamily. L-isoaspartyl/D-aspartyl protein methyltransferase family.</text>
</comment>
<keyword id="KW-0963">Cytoplasm</keyword>
<keyword id="KW-0489">Methyltransferase</keyword>
<keyword id="KW-1185">Reference proteome</keyword>
<keyword id="KW-0949">S-adenosyl-L-methionine</keyword>
<keyword id="KW-0808">Transferase</keyword>
<proteinExistence type="inferred from homology"/>
<feature type="chain" id="PRO_1000093279" description="Protein-L-isoaspartate O-methyltransferase">
    <location>
        <begin position="1"/>
        <end position="211"/>
    </location>
</feature>
<feature type="active site" evidence="1">
    <location>
        <position position="62"/>
    </location>
</feature>
<evidence type="ECO:0000255" key="1">
    <source>
        <dbReference type="HAMAP-Rule" id="MF_00090"/>
    </source>
</evidence>
<gene>
    <name evidence="1" type="primary">pcm</name>
    <name type="ordered locus">Sama_1042</name>
</gene>
<name>PIMT_SHEAM</name>
<organism>
    <name type="scientific">Shewanella amazonensis (strain ATCC BAA-1098 / SB2B)</name>
    <dbReference type="NCBI Taxonomy" id="326297"/>
    <lineage>
        <taxon>Bacteria</taxon>
        <taxon>Pseudomonadati</taxon>
        <taxon>Pseudomonadota</taxon>
        <taxon>Gammaproteobacteria</taxon>
        <taxon>Alteromonadales</taxon>
        <taxon>Shewanellaceae</taxon>
        <taxon>Shewanella</taxon>
    </lineage>
</organism>
<accession>A1S4E3</accession>
<sequence length="211" mass="23022">MNQTGSTVAINLAKKLYDAGIRDNLVLQAIANTPREMFLDAALAHKAYENTALPIGQGQTISQPYIVARMTELVMQNRPQRVLEVGTGSGYQAAILAKLVPELCTIERIKALQIQARQRLKRLDLHNVSFKYGDGWLGWPNRGPFDAIMVTAAAASLPTALLEQLSEGGRLIIPVGEDAQQLLAITRKGQEYSSEVIESVKFVPLVNGNLA</sequence>
<protein>
    <recommendedName>
        <fullName evidence="1">Protein-L-isoaspartate O-methyltransferase</fullName>
        <ecNumber evidence="1">2.1.1.77</ecNumber>
    </recommendedName>
    <alternativeName>
        <fullName evidence="1">L-isoaspartyl protein carboxyl methyltransferase</fullName>
    </alternativeName>
    <alternativeName>
        <fullName evidence="1">Protein L-isoaspartyl methyltransferase</fullName>
    </alternativeName>
    <alternativeName>
        <fullName evidence="1">Protein-beta-aspartate methyltransferase</fullName>
        <shortName evidence="1">PIMT</shortName>
    </alternativeName>
</protein>